<reference key="1">
    <citation type="journal article" date="2002" name="J. Bacteriol.">
        <title>Whole-genome comparison of Mycobacterium tuberculosis clinical and laboratory strains.</title>
        <authorList>
            <person name="Fleischmann R.D."/>
            <person name="Alland D."/>
            <person name="Eisen J.A."/>
            <person name="Carpenter L."/>
            <person name="White O."/>
            <person name="Peterson J.D."/>
            <person name="DeBoy R.T."/>
            <person name="Dodson R.J."/>
            <person name="Gwinn M.L."/>
            <person name="Haft D.H."/>
            <person name="Hickey E.K."/>
            <person name="Kolonay J.F."/>
            <person name="Nelson W.C."/>
            <person name="Umayam L.A."/>
            <person name="Ermolaeva M.D."/>
            <person name="Salzberg S.L."/>
            <person name="Delcher A."/>
            <person name="Utterback T.R."/>
            <person name="Weidman J.F."/>
            <person name="Khouri H.M."/>
            <person name="Gill J."/>
            <person name="Mikula A."/>
            <person name="Bishai W."/>
            <person name="Jacobs W.R. Jr."/>
            <person name="Venter J.C."/>
            <person name="Fraser C.M."/>
        </authorList>
    </citation>
    <scope>NUCLEOTIDE SEQUENCE [LARGE SCALE GENOMIC DNA]</scope>
    <source>
        <strain>CDC 1551 / Oshkosh</strain>
    </source>
</reference>
<dbReference type="EMBL" id="AE000516">
    <property type="protein sequence ID" value="AAK44895.1"/>
    <property type="molecule type" value="Genomic_DNA"/>
</dbReference>
<dbReference type="PIR" id="F70613">
    <property type="entry name" value="F70613"/>
</dbReference>
<dbReference type="RefSeq" id="WP_003403292.1">
    <property type="nucleotide sequence ID" value="NZ_KK341227.1"/>
</dbReference>
<dbReference type="SMR" id="P9WHC6"/>
<dbReference type="GeneID" id="45424601"/>
<dbReference type="KEGG" id="mtc:MT0669.1"/>
<dbReference type="PATRIC" id="fig|83331.31.peg.712"/>
<dbReference type="HOGENOM" id="CLU_062853_0_0_11"/>
<dbReference type="Proteomes" id="UP000001020">
    <property type="component" value="Chromosome"/>
</dbReference>
<dbReference type="GO" id="GO:0015934">
    <property type="term" value="C:large ribosomal subunit"/>
    <property type="evidence" value="ECO:0007669"/>
    <property type="project" value="InterPro"/>
</dbReference>
<dbReference type="GO" id="GO:0019843">
    <property type="term" value="F:rRNA binding"/>
    <property type="evidence" value="ECO:0007669"/>
    <property type="project" value="UniProtKB-UniRule"/>
</dbReference>
<dbReference type="GO" id="GO:0003735">
    <property type="term" value="F:structural constituent of ribosome"/>
    <property type="evidence" value="ECO:0007669"/>
    <property type="project" value="InterPro"/>
</dbReference>
<dbReference type="GO" id="GO:0000049">
    <property type="term" value="F:tRNA binding"/>
    <property type="evidence" value="ECO:0007669"/>
    <property type="project" value="UniProtKB-KW"/>
</dbReference>
<dbReference type="GO" id="GO:0006417">
    <property type="term" value="P:regulation of translation"/>
    <property type="evidence" value="ECO:0007669"/>
    <property type="project" value="UniProtKB-KW"/>
</dbReference>
<dbReference type="GO" id="GO:0006412">
    <property type="term" value="P:translation"/>
    <property type="evidence" value="ECO:0007669"/>
    <property type="project" value="UniProtKB-UniRule"/>
</dbReference>
<dbReference type="CDD" id="cd00403">
    <property type="entry name" value="Ribosomal_L1"/>
    <property type="match status" value="1"/>
</dbReference>
<dbReference type="FunFam" id="3.40.50.790:FF:000001">
    <property type="entry name" value="50S ribosomal protein L1"/>
    <property type="match status" value="1"/>
</dbReference>
<dbReference type="Gene3D" id="3.30.190.20">
    <property type="match status" value="1"/>
</dbReference>
<dbReference type="Gene3D" id="3.40.50.790">
    <property type="match status" value="1"/>
</dbReference>
<dbReference type="HAMAP" id="MF_01318_B">
    <property type="entry name" value="Ribosomal_uL1_B"/>
    <property type="match status" value="1"/>
</dbReference>
<dbReference type="InterPro" id="IPR005878">
    <property type="entry name" value="Ribosom_uL1_bac-type"/>
</dbReference>
<dbReference type="InterPro" id="IPR002143">
    <property type="entry name" value="Ribosomal_uL1"/>
</dbReference>
<dbReference type="InterPro" id="IPR023674">
    <property type="entry name" value="Ribosomal_uL1-like"/>
</dbReference>
<dbReference type="InterPro" id="IPR028364">
    <property type="entry name" value="Ribosomal_uL1/biogenesis"/>
</dbReference>
<dbReference type="InterPro" id="IPR016095">
    <property type="entry name" value="Ribosomal_uL1_3-a/b-sand"/>
</dbReference>
<dbReference type="InterPro" id="IPR023673">
    <property type="entry name" value="Ribosomal_uL1_CS"/>
</dbReference>
<dbReference type="NCBIfam" id="TIGR01169">
    <property type="entry name" value="rplA_bact"/>
    <property type="match status" value="1"/>
</dbReference>
<dbReference type="PANTHER" id="PTHR36427">
    <property type="entry name" value="54S RIBOSOMAL PROTEIN L1, MITOCHONDRIAL"/>
    <property type="match status" value="1"/>
</dbReference>
<dbReference type="PANTHER" id="PTHR36427:SF3">
    <property type="entry name" value="LARGE RIBOSOMAL SUBUNIT PROTEIN UL1M"/>
    <property type="match status" value="1"/>
</dbReference>
<dbReference type="Pfam" id="PF00687">
    <property type="entry name" value="Ribosomal_L1"/>
    <property type="match status" value="1"/>
</dbReference>
<dbReference type="PIRSF" id="PIRSF002155">
    <property type="entry name" value="Ribosomal_L1"/>
    <property type="match status" value="1"/>
</dbReference>
<dbReference type="SUPFAM" id="SSF56808">
    <property type="entry name" value="Ribosomal protein L1"/>
    <property type="match status" value="1"/>
</dbReference>
<dbReference type="PROSITE" id="PS01199">
    <property type="entry name" value="RIBOSOMAL_L1"/>
    <property type="match status" value="1"/>
</dbReference>
<feature type="chain" id="PRO_0000428210" description="Large ribosomal subunit protein uL1">
    <location>
        <begin position="1"/>
        <end position="235"/>
    </location>
</feature>
<protein>
    <recommendedName>
        <fullName evidence="1">Large ribosomal subunit protein uL1</fullName>
    </recommendedName>
    <alternativeName>
        <fullName evidence="2">50S ribosomal protein L1</fullName>
    </alternativeName>
</protein>
<sequence length="235" mass="24756">MSKTSKAYRAAAAKVDRTNLYTPLQAAKLAKETSSTKQDATVEVAIRLGVDPRKADQMVRGTVNLPHGTGKTARVAVFAVGEKADAAVAAGADVVGSDDLIERIQGGWLEFDAAIATPDQMAKVGRIARVLGPRGLMPNPKTGTVTADVAKAVADIKGGKINFRVDKQANLHFVIGKASFDEKLLAENYGAAIDEVLRLKPSSSKGRYLKKITVSTTTGPGIPVDPSITRNFAGE</sequence>
<organism>
    <name type="scientific">Mycobacterium tuberculosis (strain CDC 1551 / Oshkosh)</name>
    <dbReference type="NCBI Taxonomy" id="83331"/>
    <lineage>
        <taxon>Bacteria</taxon>
        <taxon>Bacillati</taxon>
        <taxon>Actinomycetota</taxon>
        <taxon>Actinomycetes</taxon>
        <taxon>Mycobacteriales</taxon>
        <taxon>Mycobacteriaceae</taxon>
        <taxon>Mycobacterium</taxon>
        <taxon>Mycobacterium tuberculosis complex</taxon>
    </lineage>
</organism>
<keyword id="KW-1185">Reference proteome</keyword>
<keyword id="KW-0678">Repressor</keyword>
<keyword id="KW-0687">Ribonucleoprotein</keyword>
<keyword id="KW-0689">Ribosomal protein</keyword>
<keyword id="KW-0694">RNA-binding</keyword>
<keyword id="KW-0699">rRNA-binding</keyword>
<keyword id="KW-0810">Translation regulation</keyword>
<keyword id="KW-0820">tRNA-binding</keyword>
<name>RL1_MYCTO</name>
<evidence type="ECO:0000255" key="1">
    <source>
        <dbReference type="HAMAP-Rule" id="MF_01318"/>
    </source>
</evidence>
<evidence type="ECO:0000305" key="2"/>
<gene>
    <name evidence="1" type="primary">rplA</name>
    <name type="ordered locus">MT0669.1</name>
</gene>
<accession>P9WHC6</accession>
<accession>L0T625</accession>
<accession>P96932</accession>
<proteinExistence type="inferred from homology"/>
<comment type="function">
    <text evidence="1">Binds directly to 23S rRNA. The L1 stalk is quite mobile in the ribosome, and is involved in E site tRNA release.</text>
</comment>
<comment type="function">
    <text evidence="1">Protein L1 is also a translational repressor protein, it controls the translation of the L11 operon by binding to its mRNA.</text>
</comment>
<comment type="subunit">
    <text evidence="1">Part of the 50S ribosomal subunit.</text>
</comment>
<comment type="similarity">
    <text evidence="1">Belongs to the universal ribosomal protein uL1 family.</text>
</comment>